<name>U518_DROVI</name>
<accession>B4LQW4</accession>
<dbReference type="EMBL" id="CH940649">
    <property type="protein sequence ID" value="EDW64503.1"/>
    <property type="molecule type" value="Genomic_DNA"/>
</dbReference>
<dbReference type="SMR" id="B4LQW4"/>
<dbReference type="FunCoup" id="B4LQW4">
    <property type="interactions" value="68"/>
</dbReference>
<dbReference type="STRING" id="7244.B4LQW4"/>
<dbReference type="EnsemblMetazoa" id="FBtr0233428">
    <property type="protein sequence ID" value="FBpp0231920"/>
    <property type="gene ID" value="FBgn0204673"/>
</dbReference>
<dbReference type="EnsemblMetazoa" id="XM_002052312.3">
    <property type="protein sequence ID" value="XP_002052348.1"/>
    <property type="gene ID" value="LOC6628925"/>
</dbReference>
<dbReference type="GeneID" id="6628925"/>
<dbReference type="KEGG" id="dvi:6628925"/>
<dbReference type="eggNOG" id="KOG3695">
    <property type="taxonomic scope" value="Eukaryota"/>
</dbReference>
<dbReference type="HOGENOM" id="CLU_007807_0_0_1"/>
<dbReference type="InParanoid" id="B4LQW4"/>
<dbReference type="OMA" id="RMPSLVQ"/>
<dbReference type="OrthoDB" id="6287422at2759"/>
<dbReference type="PhylomeDB" id="B4LQW4"/>
<dbReference type="Proteomes" id="UP000008792">
    <property type="component" value="Unassembled WGS sequence"/>
</dbReference>
<dbReference type="InterPro" id="IPR019384">
    <property type="entry name" value="FHIP"/>
</dbReference>
<dbReference type="InterPro" id="IPR045669">
    <property type="entry name" value="FHIP_C"/>
</dbReference>
<dbReference type="InterPro" id="IPR045668">
    <property type="entry name" value="FHIP_KELAA_motif"/>
</dbReference>
<dbReference type="PANTHER" id="PTHR21705:SF11">
    <property type="entry name" value="FHIP FAMILY PROTEIN CG3558"/>
    <property type="match status" value="1"/>
</dbReference>
<dbReference type="PANTHER" id="PTHR21705">
    <property type="entry name" value="RAI16 PROTEIN-RELATED"/>
    <property type="match status" value="1"/>
</dbReference>
<dbReference type="Pfam" id="PF19314">
    <property type="entry name" value="DUF5917"/>
    <property type="match status" value="1"/>
</dbReference>
<dbReference type="Pfam" id="PF19311">
    <property type="entry name" value="KELAA"/>
    <property type="match status" value="1"/>
</dbReference>
<dbReference type="Pfam" id="PF10257">
    <property type="entry name" value="RAI16-like"/>
    <property type="match status" value="1"/>
</dbReference>
<sequence>MSWLRTSPLRQSLTRNSGSSGSGNSSATTTLRQRPIDAATDCDPRACYDSFCKHWQQAHEIIQHPGPPTHDDVLGVVSHLDYMVTLLLVELHHCNKVSLPTADSAPPAAPCLEYLLSENLLDKLYEWASTTGRYANAVRLEQLKLYELLVSHSRHQLLCHEPFLRPLLKILASSQGEIFPPDLEKRLVILLNQLCVVLMQNVHLLDLFFFSAQTQVQEQIQNGSLAAPKSGTTTNFIIFSLLIPYVHREGSLGHQARDALLLCMALSQKNSNIGHYIAQYSSICPLLVTGLGGLYSRLPNSIEISSIDWHRITPDDVTEIPELTLFMNALEFCNAVVQVAHEMIKQQLLDFMYQGFIVPVLGPAILQTNIDSQISAMSYLDLILRSITEPGLMRAFVKFLLDTEKFDGERILDALVERLHSPDANLCMVTMALFDTLLGLHCEDLMLELLLKYLLPGKHVPISHRHKINKIDPYLNTTEFFLDLTPDVMKRARDLARPKSVQDQVDPAAATAPLAVMLPSLPSPVMSKTIGANWNYYGHYTGDSLYANVQAYLFEAHSRIAQCQRDCAKWANSYRYQKWPRQGQARANAHALELAKQFFSEFASAAPMAAAGTSDLGEKQLDSLQSIGESSGYESFKWRPADEDAEGIDVTTTTATSDTDLEHNNSSSIGSGRRDSWRISHSTRNELLLTDLDFSEDLFAQGTVSLGPFLNAIWSKLQTFTSNSLYVNLHLTGLITRLAWYPLPLIHSLLLRSDIAITSDTPSFHQVLRMLKQQIDAELPVAENSLEIIDVARSYLIDREFRLVNARKITDNAPMHQQHQQQQLQHTTNPTQQQQAQQRSTYATLSAATPVQASPTSAYDPFRRSDNKRRSISKSISSMFSRRSTSSTAATNTNTASSGLSQIYAFFTGAASTLVGGNNGEVSARGAAQEQSRGNTCETSLSTAPRQEAQTAVVSSSNSSIGGSTQTLSATHSSSTLHGVESGLQTGSFNSEPVSLDSVASMGIIANTSGTERSRDLALCAVLLDEWLKELAAIALEQSVVLVTEQLL</sequence>
<gene>
    <name type="ORF">GJ17503</name>
</gene>
<comment type="similarity">
    <text evidence="3">Belongs to the FHIP family.</text>
</comment>
<feature type="chain" id="PRO_0000379013" description="FHIP family protein GJ17503">
    <location>
        <begin position="1"/>
        <end position="1048"/>
    </location>
</feature>
<feature type="region of interest" description="Disordered" evidence="2">
    <location>
        <begin position="1"/>
        <end position="32"/>
    </location>
</feature>
<feature type="region of interest" description="Disordered" evidence="2">
    <location>
        <begin position="652"/>
        <end position="675"/>
    </location>
</feature>
<feature type="region of interest" description="Disordered" evidence="2">
    <location>
        <begin position="813"/>
        <end position="871"/>
    </location>
</feature>
<feature type="region of interest" description="Disordered" evidence="2">
    <location>
        <begin position="924"/>
        <end position="984"/>
    </location>
</feature>
<feature type="compositionally biased region" description="Polar residues" evidence="2">
    <location>
        <begin position="1"/>
        <end position="15"/>
    </location>
</feature>
<feature type="compositionally biased region" description="Low complexity" evidence="2">
    <location>
        <begin position="16"/>
        <end position="26"/>
    </location>
</feature>
<feature type="compositionally biased region" description="Low complexity" evidence="2">
    <location>
        <begin position="816"/>
        <end position="838"/>
    </location>
</feature>
<feature type="compositionally biased region" description="Polar residues" evidence="2">
    <location>
        <begin position="839"/>
        <end position="857"/>
    </location>
</feature>
<feature type="compositionally biased region" description="Polar residues" evidence="2">
    <location>
        <begin position="929"/>
        <end position="954"/>
    </location>
</feature>
<feature type="compositionally biased region" description="Low complexity" evidence="2">
    <location>
        <begin position="955"/>
        <end position="978"/>
    </location>
</feature>
<feature type="modified residue" description="Phosphoserine" evidence="1">
    <location>
        <position position="500"/>
    </location>
</feature>
<reference key="1">
    <citation type="journal article" date="2007" name="Nature">
        <title>Evolution of genes and genomes on the Drosophila phylogeny.</title>
        <authorList>
            <consortium name="Drosophila 12 genomes consortium"/>
        </authorList>
    </citation>
    <scope>NUCLEOTIDE SEQUENCE [LARGE SCALE GENOMIC DNA]</scope>
    <source>
        <strain>Tucson 15010-1051.87</strain>
    </source>
</reference>
<evidence type="ECO:0000250" key="1"/>
<evidence type="ECO:0000256" key="2">
    <source>
        <dbReference type="SAM" id="MobiDB-lite"/>
    </source>
</evidence>
<evidence type="ECO:0000305" key="3"/>
<protein>
    <recommendedName>
        <fullName>FHIP family protein GJ17503</fullName>
    </recommendedName>
</protein>
<organism>
    <name type="scientific">Drosophila virilis</name>
    <name type="common">Fruit fly</name>
    <dbReference type="NCBI Taxonomy" id="7244"/>
    <lineage>
        <taxon>Eukaryota</taxon>
        <taxon>Metazoa</taxon>
        <taxon>Ecdysozoa</taxon>
        <taxon>Arthropoda</taxon>
        <taxon>Hexapoda</taxon>
        <taxon>Insecta</taxon>
        <taxon>Pterygota</taxon>
        <taxon>Neoptera</taxon>
        <taxon>Endopterygota</taxon>
        <taxon>Diptera</taxon>
        <taxon>Brachycera</taxon>
        <taxon>Muscomorpha</taxon>
        <taxon>Ephydroidea</taxon>
        <taxon>Drosophilidae</taxon>
        <taxon>Drosophila</taxon>
    </lineage>
</organism>
<proteinExistence type="inferred from homology"/>
<keyword id="KW-0597">Phosphoprotein</keyword>
<keyword id="KW-1185">Reference proteome</keyword>